<evidence type="ECO:0000255" key="1">
    <source>
        <dbReference type="HAMAP-Rule" id="MF_00113"/>
    </source>
</evidence>
<gene>
    <name evidence="1" type="primary">queA</name>
    <name type="ordered locus">Csal_2832</name>
</gene>
<name>QUEA_CHRSD</name>
<reference key="1">
    <citation type="journal article" date="2011" name="Stand. Genomic Sci.">
        <title>Complete genome sequence of the halophilic and highly halotolerant Chromohalobacter salexigens type strain (1H11(T)).</title>
        <authorList>
            <person name="Copeland A."/>
            <person name="O'Connor K."/>
            <person name="Lucas S."/>
            <person name="Lapidus A."/>
            <person name="Berry K.W."/>
            <person name="Detter J.C."/>
            <person name="Del Rio T.G."/>
            <person name="Hammon N."/>
            <person name="Dalin E."/>
            <person name="Tice H."/>
            <person name="Pitluck S."/>
            <person name="Bruce D."/>
            <person name="Goodwin L."/>
            <person name="Han C."/>
            <person name="Tapia R."/>
            <person name="Saunders E."/>
            <person name="Schmutz J."/>
            <person name="Brettin T."/>
            <person name="Larimer F."/>
            <person name="Land M."/>
            <person name="Hauser L."/>
            <person name="Vargas C."/>
            <person name="Nieto J.J."/>
            <person name="Kyrpides N.C."/>
            <person name="Ivanova N."/>
            <person name="Goker M."/>
            <person name="Klenk H.P."/>
            <person name="Csonka L.N."/>
            <person name="Woyke T."/>
        </authorList>
    </citation>
    <scope>NUCLEOTIDE SEQUENCE [LARGE SCALE GENOMIC DNA]</scope>
    <source>
        <strain>ATCC BAA-138 / DSM 3043 / CIP 106854 / NCIMB 13768 / 1H11</strain>
    </source>
</reference>
<dbReference type="EC" id="2.4.99.17" evidence="1"/>
<dbReference type="EMBL" id="CP000285">
    <property type="protein sequence ID" value="ABE60178.1"/>
    <property type="molecule type" value="Genomic_DNA"/>
</dbReference>
<dbReference type="RefSeq" id="WP_011508124.1">
    <property type="nucleotide sequence ID" value="NC_007963.1"/>
</dbReference>
<dbReference type="SMR" id="Q1QTN0"/>
<dbReference type="STRING" id="290398.Csal_2832"/>
<dbReference type="GeneID" id="95335527"/>
<dbReference type="KEGG" id="csa:Csal_2832"/>
<dbReference type="eggNOG" id="COG0809">
    <property type="taxonomic scope" value="Bacteria"/>
</dbReference>
<dbReference type="HOGENOM" id="CLU_039110_1_0_6"/>
<dbReference type="OrthoDB" id="9805933at2"/>
<dbReference type="UniPathway" id="UPA00392"/>
<dbReference type="Proteomes" id="UP000000239">
    <property type="component" value="Chromosome"/>
</dbReference>
<dbReference type="GO" id="GO:0005737">
    <property type="term" value="C:cytoplasm"/>
    <property type="evidence" value="ECO:0007669"/>
    <property type="project" value="UniProtKB-SubCell"/>
</dbReference>
<dbReference type="GO" id="GO:0051075">
    <property type="term" value="F:S-adenosylmethionine:tRNA ribosyltransferase-isomerase activity"/>
    <property type="evidence" value="ECO:0007669"/>
    <property type="project" value="UniProtKB-EC"/>
</dbReference>
<dbReference type="GO" id="GO:0008616">
    <property type="term" value="P:queuosine biosynthetic process"/>
    <property type="evidence" value="ECO:0007669"/>
    <property type="project" value="UniProtKB-UniRule"/>
</dbReference>
<dbReference type="GO" id="GO:0002099">
    <property type="term" value="P:tRNA wobble guanine modification"/>
    <property type="evidence" value="ECO:0007669"/>
    <property type="project" value="TreeGrafter"/>
</dbReference>
<dbReference type="FunFam" id="3.40.1780.10:FF:000001">
    <property type="entry name" value="S-adenosylmethionine:tRNA ribosyltransferase-isomerase"/>
    <property type="match status" value="1"/>
</dbReference>
<dbReference type="Gene3D" id="2.40.10.240">
    <property type="entry name" value="QueA-like"/>
    <property type="match status" value="1"/>
</dbReference>
<dbReference type="Gene3D" id="3.40.1780.10">
    <property type="entry name" value="QueA-like"/>
    <property type="match status" value="1"/>
</dbReference>
<dbReference type="HAMAP" id="MF_00113">
    <property type="entry name" value="QueA"/>
    <property type="match status" value="1"/>
</dbReference>
<dbReference type="InterPro" id="IPR003699">
    <property type="entry name" value="QueA"/>
</dbReference>
<dbReference type="InterPro" id="IPR042118">
    <property type="entry name" value="QueA_dom1"/>
</dbReference>
<dbReference type="InterPro" id="IPR042119">
    <property type="entry name" value="QueA_dom2"/>
</dbReference>
<dbReference type="InterPro" id="IPR036100">
    <property type="entry name" value="QueA_sf"/>
</dbReference>
<dbReference type="NCBIfam" id="NF001140">
    <property type="entry name" value="PRK00147.1"/>
    <property type="match status" value="1"/>
</dbReference>
<dbReference type="NCBIfam" id="TIGR00113">
    <property type="entry name" value="queA"/>
    <property type="match status" value="1"/>
</dbReference>
<dbReference type="PANTHER" id="PTHR30307">
    <property type="entry name" value="S-ADENOSYLMETHIONINE:TRNA RIBOSYLTRANSFERASE-ISOMERASE"/>
    <property type="match status" value="1"/>
</dbReference>
<dbReference type="PANTHER" id="PTHR30307:SF0">
    <property type="entry name" value="S-ADENOSYLMETHIONINE:TRNA RIBOSYLTRANSFERASE-ISOMERASE"/>
    <property type="match status" value="1"/>
</dbReference>
<dbReference type="Pfam" id="PF02547">
    <property type="entry name" value="Queuosine_synth"/>
    <property type="match status" value="1"/>
</dbReference>
<dbReference type="SUPFAM" id="SSF111337">
    <property type="entry name" value="QueA-like"/>
    <property type="match status" value="1"/>
</dbReference>
<keyword id="KW-0963">Cytoplasm</keyword>
<keyword id="KW-0671">Queuosine biosynthesis</keyword>
<keyword id="KW-1185">Reference proteome</keyword>
<keyword id="KW-0949">S-adenosyl-L-methionine</keyword>
<keyword id="KW-0808">Transferase</keyword>
<feature type="chain" id="PRO_1000015196" description="S-adenosylmethionine:tRNA ribosyltransferase-isomerase">
    <location>
        <begin position="1"/>
        <end position="356"/>
    </location>
</feature>
<accession>Q1QTN0</accession>
<comment type="function">
    <text evidence="1">Transfers and isomerizes the ribose moiety from AdoMet to the 7-aminomethyl group of 7-deazaguanine (preQ1-tRNA) to give epoxyqueuosine (oQ-tRNA).</text>
</comment>
<comment type="catalytic activity">
    <reaction evidence="1">
        <text>7-aminomethyl-7-carbaguanosine(34) in tRNA + S-adenosyl-L-methionine = epoxyqueuosine(34) in tRNA + adenine + L-methionine + 2 H(+)</text>
        <dbReference type="Rhea" id="RHEA:32155"/>
        <dbReference type="Rhea" id="RHEA-COMP:10342"/>
        <dbReference type="Rhea" id="RHEA-COMP:18582"/>
        <dbReference type="ChEBI" id="CHEBI:15378"/>
        <dbReference type="ChEBI" id="CHEBI:16708"/>
        <dbReference type="ChEBI" id="CHEBI:57844"/>
        <dbReference type="ChEBI" id="CHEBI:59789"/>
        <dbReference type="ChEBI" id="CHEBI:82833"/>
        <dbReference type="ChEBI" id="CHEBI:194443"/>
        <dbReference type="EC" id="2.4.99.17"/>
    </reaction>
</comment>
<comment type="pathway">
    <text evidence="1">tRNA modification; tRNA-queuosine biosynthesis.</text>
</comment>
<comment type="subunit">
    <text evidence="1">Monomer.</text>
</comment>
<comment type="subcellular location">
    <subcellularLocation>
        <location evidence="1">Cytoplasm</location>
    </subcellularLocation>
</comment>
<comment type="similarity">
    <text evidence="1">Belongs to the QueA family.</text>
</comment>
<proteinExistence type="inferred from homology"/>
<sequence>MQRADFHFDLPDELIARYPSETRSDCRLLCLDDATGDIAHRRFTDLLTLLAPGDLLVFNDTRVIPARLFGQKASGGRVEMLLERPLDAHRGLAHLRASKAPRPGTELIFEGDVHAVVEARHDALFELRFLGETPMIELLENHGHMPLPPYIDREDELDDRERYQTVYARREGAVAAPTAGLHFDTPLMEALRERGVEMGYVTLHVGAGTFQPVRVDDIREHHMHSEWLEVDETLCRQVEATRARGGRVIAVGTTSVRCLETASQGQEDGHIAPFRGDTDIFIYPGYQWRCVDALITNFHLPESTLLMLVSAFAGYPQVMRAYRAAVAERYAFFSYGDAMFLNRSASSHPFPENSHA</sequence>
<protein>
    <recommendedName>
        <fullName evidence="1">S-adenosylmethionine:tRNA ribosyltransferase-isomerase</fullName>
        <ecNumber evidence="1">2.4.99.17</ecNumber>
    </recommendedName>
    <alternativeName>
        <fullName evidence="1">Queuosine biosynthesis protein QueA</fullName>
    </alternativeName>
</protein>
<organism>
    <name type="scientific">Chromohalobacter salexigens (strain ATCC BAA-138 / DSM 3043 / CIP 106854 / NCIMB 13768 / 1H11)</name>
    <dbReference type="NCBI Taxonomy" id="290398"/>
    <lineage>
        <taxon>Bacteria</taxon>
        <taxon>Pseudomonadati</taxon>
        <taxon>Pseudomonadota</taxon>
        <taxon>Gammaproteobacteria</taxon>
        <taxon>Oceanospirillales</taxon>
        <taxon>Halomonadaceae</taxon>
        <taxon>Chromohalobacter</taxon>
    </lineage>
</organism>